<feature type="chain" id="PRO_0000307481" description="Triosephosphate isomerase">
    <location>
        <begin position="1"/>
        <end position="248"/>
    </location>
</feature>
<feature type="active site" description="Electrophile" evidence="1">
    <location>
        <position position="94"/>
    </location>
</feature>
<feature type="active site" description="Proton acceptor" evidence="1">
    <location>
        <position position="166"/>
    </location>
</feature>
<feature type="binding site" evidence="1">
    <location>
        <begin position="9"/>
        <end position="11"/>
    </location>
    <ligand>
        <name>substrate</name>
    </ligand>
</feature>
<feature type="binding site" evidence="1">
    <location>
        <position position="172"/>
    </location>
    <ligand>
        <name>substrate</name>
    </ligand>
</feature>
<feature type="binding site" evidence="1">
    <location>
        <position position="211"/>
    </location>
    <ligand>
        <name>substrate</name>
    </ligand>
</feature>
<feature type="binding site" evidence="1">
    <location>
        <begin position="232"/>
        <end position="233"/>
    </location>
    <ligand>
        <name>substrate</name>
    </ligand>
</feature>
<organism>
    <name type="scientific">Herminiimonas arsenicoxydans</name>
    <dbReference type="NCBI Taxonomy" id="204773"/>
    <lineage>
        <taxon>Bacteria</taxon>
        <taxon>Pseudomonadati</taxon>
        <taxon>Pseudomonadota</taxon>
        <taxon>Betaproteobacteria</taxon>
        <taxon>Burkholderiales</taxon>
        <taxon>Oxalobacteraceae</taxon>
        <taxon>Herminiimonas</taxon>
    </lineage>
</organism>
<proteinExistence type="inferred from homology"/>
<name>TPIS_HERAR</name>
<protein>
    <recommendedName>
        <fullName evidence="1">Triosephosphate isomerase</fullName>
        <shortName evidence="1">TIM</shortName>
        <shortName evidence="1">TPI</shortName>
        <ecNumber evidence="1">5.3.1.1</ecNumber>
    </recommendedName>
    <alternativeName>
        <fullName evidence="1">Triose-phosphate isomerase</fullName>
    </alternativeName>
</protein>
<dbReference type="EC" id="5.3.1.1" evidence="1"/>
<dbReference type="EMBL" id="CU207211">
    <property type="protein sequence ID" value="CAL61983.1"/>
    <property type="molecule type" value="Genomic_DNA"/>
</dbReference>
<dbReference type="SMR" id="A4G646"/>
<dbReference type="STRING" id="204773.HEAR1828"/>
<dbReference type="KEGG" id="har:HEAR1828"/>
<dbReference type="eggNOG" id="COG0149">
    <property type="taxonomic scope" value="Bacteria"/>
</dbReference>
<dbReference type="HOGENOM" id="CLU_024251_2_3_4"/>
<dbReference type="OrthoDB" id="9809429at2"/>
<dbReference type="UniPathway" id="UPA00109">
    <property type="reaction ID" value="UER00189"/>
</dbReference>
<dbReference type="UniPathway" id="UPA00138"/>
<dbReference type="Proteomes" id="UP000006697">
    <property type="component" value="Chromosome"/>
</dbReference>
<dbReference type="GO" id="GO:0005829">
    <property type="term" value="C:cytosol"/>
    <property type="evidence" value="ECO:0007669"/>
    <property type="project" value="TreeGrafter"/>
</dbReference>
<dbReference type="GO" id="GO:0004807">
    <property type="term" value="F:triose-phosphate isomerase activity"/>
    <property type="evidence" value="ECO:0007669"/>
    <property type="project" value="UniProtKB-UniRule"/>
</dbReference>
<dbReference type="GO" id="GO:0006094">
    <property type="term" value="P:gluconeogenesis"/>
    <property type="evidence" value="ECO:0007669"/>
    <property type="project" value="UniProtKB-UniRule"/>
</dbReference>
<dbReference type="GO" id="GO:0046166">
    <property type="term" value="P:glyceraldehyde-3-phosphate biosynthetic process"/>
    <property type="evidence" value="ECO:0007669"/>
    <property type="project" value="TreeGrafter"/>
</dbReference>
<dbReference type="GO" id="GO:0019563">
    <property type="term" value="P:glycerol catabolic process"/>
    <property type="evidence" value="ECO:0007669"/>
    <property type="project" value="TreeGrafter"/>
</dbReference>
<dbReference type="GO" id="GO:0006096">
    <property type="term" value="P:glycolytic process"/>
    <property type="evidence" value="ECO:0007669"/>
    <property type="project" value="UniProtKB-UniRule"/>
</dbReference>
<dbReference type="CDD" id="cd00311">
    <property type="entry name" value="TIM"/>
    <property type="match status" value="1"/>
</dbReference>
<dbReference type="FunFam" id="3.20.20.70:FF:000016">
    <property type="entry name" value="Triosephosphate isomerase"/>
    <property type="match status" value="1"/>
</dbReference>
<dbReference type="Gene3D" id="3.20.20.70">
    <property type="entry name" value="Aldolase class I"/>
    <property type="match status" value="1"/>
</dbReference>
<dbReference type="HAMAP" id="MF_00147_B">
    <property type="entry name" value="TIM_B"/>
    <property type="match status" value="1"/>
</dbReference>
<dbReference type="InterPro" id="IPR013785">
    <property type="entry name" value="Aldolase_TIM"/>
</dbReference>
<dbReference type="InterPro" id="IPR035990">
    <property type="entry name" value="TIM_sf"/>
</dbReference>
<dbReference type="InterPro" id="IPR022896">
    <property type="entry name" value="TrioseP_Isoase_bac/euk"/>
</dbReference>
<dbReference type="InterPro" id="IPR000652">
    <property type="entry name" value="Triosephosphate_isomerase"/>
</dbReference>
<dbReference type="InterPro" id="IPR020861">
    <property type="entry name" value="Triosephosphate_isomerase_AS"/>
</dbReference>
<dbReference type="NCBIfam" id="TIGR00419">
    <property type="entry name" value="tim"/>
    <property type="match status" value="1"/>
</dbReference>
<dbReference type="PANTHER" id="PTHR21139">
    <property type="entry name" value="TRIOSEPHOSPHATE ISOMERASE"/>
    <property type="match status" value="1"/>
</dbReference>
<dbReference type="PANTHER" id="PTHR21139:SF42">
    <property type="entry name" value="TRIOSEPHOSPHATE ISOMERASE"/>
    <property type="match status" value="1"/>
</dbReference>
<dbReference type="Pfam" id="PF00121">
    <property type="entry name" value="TIM"/>
    <property type="match status" value="1"/>
</dbReference>
<dbReference type="SUPFAM" id="SSF51351">
    <property type="entry name" value="Triosephosphate isomerase (TIM)"/>
    <property type="match status" value="1"/>
</dbReference>
<dbReference type="PROSITE" id="PS00171">
    <property type="entry name" value="TIM_1"/>
    <property type="match status" value="1"/>
</dbReference>
<dbReference type="PROSITE" id="PS51440">
    <property type="entry name" value="TIM_2"/>
    <property type="match status" value="1"/>
</dbReference>
<reference key="1">
    <citation type="journal article" date="2007" name="PLoS Genet.">
        <title>A tale of two oxidation states: bacterial colonization of arsenic-rich environments.</title>
        <authorList>
            <person name="Muller D."/>
            <person name="Medigue C."/>
            <person name="Koechler S."/>
            <person name="Barbe V."/>
            <person name="Barakat M."/>
            <person name="Talla E."/>
            <person name="Bonnefoy V."/>
            <person name="Krin E."/>
            <person name="Arsene-Ploetze F."/>
            <person name="Carapito C."/>
            <person name="Chandler M."/>
            <person name="Cournoyer B."/>
            <person name="Cruveiller S."/>
            <person name="Dossat C."/>
            <person name="Duval S."/>
            <person name="Heymann M."/>
            <person name="Leize E."/>
            <person name="Lieutaud A."/>
            <person name="Lievremont D."/>
            <person name="Makita Y."/>
            <person name="Mangenot S."/>
            <person name="Nitschke W."/>
            <person name="Ortet P."/>
            <person name="Perdrial N."/>
            <person name="Schoepp B."/>
            <person name="Siguier P."/>
            <person name="Simeonova D.D."/>
            <person name="Rouy Z."/>
            <person name="Segurens B."/>
            <person name="Turlin E."/>
            <person name="Vallenet D."/>
            <person name="van Dorsselaer A."/>
            <person name="Weiss S."/>
            <person name="Weissenbach J."/>
            <person name="Lett M.-C."/>
            <person name="Danchin A."/>
            <person name="Bertin P.N."/>
        </authorList>
    </citation>
    <scope>NUCLEOTIDE SEQUENCE [LARGE SCALE GENOMIC DNA]</scope>
    <source>
        <strain>ULPAs1</strain>
    </source>
</reference>
<comment type="function">
    <text evidence="1">Involved in the gluconeogenesis. Catalyzes stereospecifically the conversion of dihydroxyacetone phosphate (DHAP) to D-glyceraldehyde-3-phosphate (G3P).</text>
</comment>
<comment type="catalytic activity">
    <reaction evidence="1">
        <text>D-glyceraldehyde 3-phosphate = dihydroxyacetone phosphate</text>
        <dbReference type="Rhea" id="RHEA:18585"/>
        <dbReference type="ChEBI" id="CHEBI:57642"/>
        <dbReference type="ChEBI" id="CHEBI:59776"/>
        <dbReference type="EC" id="5.3.1.1"/>
    </reaction>
</comment>
<comment type="pathway">
    <text evidence="1">Carbohydrate biosynthesis; gluconeogenesis.</text>
</comment>
<comment type="pathway">
    <text evidence="1">Carbohydrate degradation; glycolysis; D-glyceraldehyde 3-phosphate from glycerone phosphate: step 1/1.</text>
</comment>
<comment type="subunit">
    <text evidence="1">Homodimer.</text>
</comment>
<comment type="subcellular location">
    <subcellularLocation>
        <location evidence="1">Cytoplasm</location>
    </subcellularLocation>
</comment>
<comment type="similarity">
    <text evidence="1">Belongs to the triosephosphate isomerase family.</text>
</comment>
<evidence type="ECO:0000255" key="1">
    <source>
        <dbReference type="HAMAP-Rule" id="MF_00147"/>
    </source>
</evidence>
<accession>A4G646</accession>
<keyword id="KW-0963">Cytoplasm</keyword>
<keyword id="KW-0312">Gluconeogenesis</keyword>
<keyword id="KW-0324">Glycolysis</keyword>
<keyword id="KW-0413">Isomerase</keyword>
<keyword id="KW-1185">Reference proteome</keyword>
<sequence>MRRKLVAGNWKMNGSLAANALLLAEIKAEFGNPACDVAVCVPAPYLAQCLSLLSDSTIALGAQDVSSHDSGAYTGEVSTAMLLEFACRYVIVGHSERRAYFGETNELVAQKTVRALSAGLMPIVCVGETLEQREAGQTDEVVGRQIDAVLSSIAENDLAKIVVAYEPVWAIGTGKTATPEMAQEVHVMLRRRLHAKNAQAATEVRILYGGSMKPDNAKELLAMPDIDGGLIGGAALKAADFLAIIRAA</sequence>
<gene>
    <name evidence="1" type="primary">tpiA</name>
    <name type="ordered locus">HEAR1828</name>
</gene>